<keyword id="KW-1185">Reference proteome</keyword>
<keyword id="KW-0687">Ribonucleoprotein</keyword>
<keyword id="KW-0689">Ribosomal protein</keyword>
<keyword id="KW-0694">RNA-binding</keyword>
<keyword id="KW-0699">rRNA-binding</keyword>
<organism>
    <name type="scientific">Clostridium tetani (strain Massachusetts / E88)</name>
    <dbReference type="NCBI Taxonomy" id="212717"/>
    <lineage>
        <taxon>Bacteria</taxon>
        <taxon>Bacillati</taxon>
        <taxon>Bacillota</taxon>
        <taxon>Clostridia</taxon>
        <taxon>Eubacteriales</taxon>
        <taxon>Clostridiaceae</taxon>
        <taxon>Clostridium</taxon>
    </lineage>
</organism>
<protein>
    <recommendedName>
        <fullName evidence="1">Large ribosomal subunit protein uL6</fullName>
    </recommendedName>
    <alternativeName>
        <fullName evidence="2">50S ribosomal protein L6</fullName>
    </alternativeName>
</protein>
<feature type="chain" id="PRO_0000260853" description="Large ribosomal subunit protein uL6">
    <location>
        <begin position="1"/>
        <end position="180"/>
    </location>
</feature>
<comment type="function">
    <text evidence="1">This protein binds to the 23S rRNA, and is important in its secondary structure. It is located near the subunit interface in the base of the L7/L12 stalk, and near the tRNA binding site of the peptidyltransferase center.</text>
</comment>
<comment type="subunit">
    <text evidence="1">Part of the 50S ribosomal subunit.</text>
</comment>
<comment type="similarity">
    <text evidence="1">Belongs to the universal ribosomal protein uL6 family.</text>
</comment>
<name>RL6_CLOTE</name>
<gene>
    <name evidence="1" type="primary">rplF</name>
    <name type="ordered locus">CTC_02588</name>
</gene>
<dbReference type="EMBL" id="AE015927">
    <property type="protein sequence ID" value="AAO37045.1"/>
    <property type="molecule type" value="Genomic_DNA"/>
</dbReference>
<dbReference type="RefSeq" id="WP_011100706.1">
    <property type="nucleotide sequence ID" value="NC_004557.1"/>
</dbReference>
<dbReference type="SMR" id="Q890Q0"/>
<dbReference type="STRING" id="212717.CTC_02588"/>
<dbReference type="GeneID" id="24254281"/>
<dbReference type="KEGG" id="ctc:CTC_02588"/>
<dbReference type="HOGENOM" id="CLU_065464_1_2_9"/>
<dbReference type="OrthoDB" id="9805007at2"/>
<dbReference type="Proteomes" id="UP000001412">
    <property type="component" value="Chromosome"/>
</dbReference>
<dbReference type="GO" id="GO:0022625">
    <property type="term" value="C:cytosolic large ribosomal subunit"/>
    <property type="evidence" value="ECO:0007669"/>
    <property type="project" value="TreeGrafter"/>
</dbReference>
<dbReference type="GO" id="GO:0019843">
    <property type="term" value="F:rRNA binding"/>
    <property type="evidence" value="ECO:0007669"/>
    <property type="project" value="UniProtKB-UniRule"/>
</dbReference>
<dbReference type="GO" id="GO:0003735">
    <property type="term" value="F:structural constituent of ribosome"/>
    <property type="evidence" value="ECO:0007669"/>
    <property type="project" value="InterPro"/>
</dbReference>
<dbReference type="GO" id="GO:0002181">
    <property type="term" value="P:cytoplasmic translation"/>
    <property type="evidence" value="ECO:0007669"/>
    <property type="project" value="TreeGrafter"/>
</dbReference>
<dbReference type="FunFam" id="3.90.930.12:FF:000001">
    <property type="entry name" value="50S ribosomal protein L6"/>
    <property type="match status" value="1"/>
</dbReference>
<dbReference type="FunFam" id="3.90.930.12:FF:000002">
    <property type="entry name" value="50S ribosomal protein L6"/>
    <property type="match status" value="1"/>
</dbReference>
<dbReference type="Gene3D" id="3.90.930.12">
    <property type="entry name" value="Ribosomal protein L6, alpha-beta domain"/>
    <property type="match status" value="2"/>
</dbReference>
<dbReference type="HAMAP" id="MF_01365_B">
    <property type="entry name" value="Ribosomal_uL6_B"/>
    <property type="match status" value="1"/>
</dbReference>
<dbReference type="InterPro" id="IPR000702">
    <property type="entry name" value="Ribosomal_uL6-like"/>
</dbReference>
<dbReference type="InterPro" id="IPR036789">
    <property type="entry name" value="Ribosomal_uL6-like_a/b-dom_sf"/>
</dbReference>
<dbReference type="InterPro" id="IPR020040">
    <property type="entry name" value="Ribosomal_uL6_a/b-dom"/>
</dbReference>
<dbReference type="InterPro" id="IPR019906">
    <property type="entry name" value="Ribosomal_uL6_bac-type"/>
</dbReference>
<dbReference type="InterPro" id="IPR002358">
    <property type="entry name" value="Ribosomal_uL6_CS"/>
</dbReference>
<dbReference type="NCBIfam" id="TIGR03654">
    <property type="entry name" value="L6_bact"/>
    <property type="match status" value="1"/>
</dbReference>
<dbReference type="PANTHER" id="PTHR11655">
    <property type="entry name" value="60S/50S RIBOSOMAL PROTEIN L6/L9"/>
    <property type="match status" value="1"/>
</dbReference>
<dbReference type="PANTHER" id="PTHR11655:SF14">
    <property type="entry name" value="LARGE RIBOSOMAL SUBUNIT PROTEIN UL6M"/>
    <property type="match status" value="1"/>
</dbReference>
<dbReference type="Pfam" id="PF00347">
    <property type="entry name" value="Ribosomal_L6"/>
    <property type="match status" value="2"/>
</dbReference>
<dbReference type="PIRSF" id="PIRSF002162">
    <property type="entry name" value="Ribosomal_L6"/>
    <property type="match status" value="1"/>
</dbReference>
<dbReference type="PRINTS" id="PR00059">
    <property type="entry name" value="RIBOSOMALL6"/>
</dbReference>
<dbReference type="SUPFAM" id="SSF56053">
    <property type="entry name" value="Ribosomal protein L6"/>
    <property type="match status" value="2"/>
</dbReference>
<dbReference type="PROSITE" id="PS00525">
    <property type="entry name" value="RIBOSOMAL_L6_1"/>
    <property type="match status" value="1"/>
</dbReference>
<proteinExistence type="inferred from homology"/>
<sequence>MSRIGRLPIAIPNGVTVTVSPENVVTVKGPKGELTKTMHPNIDIAIEENSVIVTRKNDEKQNRSLHGLTRSLVNNMVVGVTEGYEKKLELVGVGYRAQLQGKKLVLNLGFSHPVEIEAKEGVEFQLDGTNKITVKGIDKELVGAVASDIRSWRKPEPYKGKGIKYENEAIRRKEGKTGKK</sequence>
<accession>Q890Q0</accession>
<reference key="1">
    <citation type="journal article" date="2003" name="Proc. Natl. Acad. Sci. U.S.A.">
        <title>The genome sequence of Clostridium tetani, the causative agent of tetanus disease.</title>
        <authorList>
            <person name="Brueggemann H."/>
            <person name="Baeumer S."/>
            <person name="Fricke W.F."/>
            <person name="Wiezer A."/>
            <person name="Liesegang H."/>
            <person name="Decker I."/>
            <person name="Herzberg C."/>
            <person name="Martinez-Arias R."/>
            <person name="Merkl R."/>
            <person name="Henne A."/>
            <person name="Gottschalk G."/>
        </authorList>
    </citation>
    <scope>NUCLEOTIDE SEQUENCE [LARGE SCALE GENOMIC DNA]</scope>
    <source>
        <strain>Massachusetts / E88</strain>
    </source>
</reference>
<evidence type="ECO:0000255" key="1">
    <source>
        <dbReference type="HAMAP-Rule" id="MF_01365"/>
    </source>
</evidence>
<evidence type="ECO:0000305" key="2"/>